<accession>Q1R824</accession>
<protein>
    <recommendedName>
        <fullName evidence="1">Protein NrdI</fullName>
    </recommendedName>
</protein>
<gene>
    <name evidence="1" type="primary">nrdI</name>
    <name type="ordered locus">UTI89_C3034</name>
</gene>
<organism>
    <name type="scientific">Escherichia coli (strain UTI89 / UPEC)</name>
    <dbReference type="NCBI Taxonomy" id="364106"/>
    <lineage>
        <taxon>Bacteria</taxon>
        <taxon>Pseudomonadati</taxon>
        <taxon>Pseudomonadota</taxon>
        <taxon>Gammaproteobacteria</taxon>
        <taxon>Enterobacterales</taxon>
        <taxon>Enterobacteriaceae</taxon>
        <taxon>Escherichia</taxon>
    </lineage>
</organism>
<evidence type="ECO:0000255" key="1">
    <source>
        <dbReference type="HAMAP-Rule" id="MF_00128"/>
    </source>
</evidence>
<sequence>MSQLVYFSSSSENTQRFIERLGLPAVRIPLNERERIQVDEPYILIVPSYGGGGTAGAVPRQVIRFLNDEHNRALLRGVIASGNRNFGEAYGRAGDVIARKCSVPWLYRFELMGTQSDIENVRKGVTEFWQRQPQNA</sequence>
<reference key="1">
    <citation type="journal article" date="2006" name="Proc. Natl. Acad. Sci. U.S.A.">
        <title>Identification of genes subject to positive selection in uropathogenic strains of Escherichia coli: a comparative genomics approach.</title>
        <authorList>
            <person name="Chen S.L."/>
            <person name="Hung C.-S."/>
            <person name="Xu J."/>
            <person name="Reigstad C.S."/>
            <person name="Magrini V."/>
            <person name="Sabo A."/>
            <person name="Blasiar D."/>
            <person name="Bieri T."/>
            <person name="Meyer R.R."/>
            <person name="Ozersky P."/>
            <person name="Armstrong J.R."/>
            <person name="Fulton R.S."/>
            <person name="Latreille J.P."/>
            <person name="Spieth J."/>
            <person name="Hooton T.M."/>
            <person name="Mardis E.R."/>
            <person name="Hultgren S.J."/>
            <person name="Gordon J.I."/>
        </authorList>
    </citation>
    <scope>NUCLEOTIDE SEQUENCE [LARGE SCALE GENOMIC DNA]</scope>
    <source>
        <strain>UTI89 / UPEC</strain>
    </source>
</reference>
<dbReference type="EMBL" id="CP000243">
    <property type="protein sequence ID" value="ABE08490.1"/>
    <property type="molecule type" value="Genomic_DNA"/>
</dbReference>
<dbReference type="RefSeq" id="WP_000080951.1">
    <property type="nucleotide sequence ID" value="NZ_CP064825.1"/>
</dbReference>
<dbReference type="SMR" id="Q1R824"/>
<dbReference type="KEGG" id="eci:UTI89_C3034"/>
<dbReference type="HOGENOM" id="CLU_114845_0_0_6"/>
<dbReference type="Proteomes" id="UP000001952">
    <property type="component" value="Chromosome"/>
</dbReference>
<dbReference type="GO" id="GO:0010181">
    <property type="term" value="F:FMN binding"/>
    <property type="evidence" value="ECO:0007669"/>
    <property type="project" value="InterPro"/>
</dbReference>
<dbReference type="GO" id="GO:0036211">
    <property type="term" value="P:protein modification process"/>
    <property type="evidence" value="ECO:0007669"/>
    <property type="project" value="InterPro"/>
</dbReference>
<dbReference type="FunFam" id="3.40.50.360:FF:000005">
    <property type="entry name" value="Protein NrdI"/>
    <property type="match status" value="1"/>
</dbReference>
<dbReference type="Gene3D" id="3.40.50.360">
    <property type="match status" value="1"/>
</dbReference>
<dbReference type="HAMAP" id="MF_00128">
    <property type="entry name" value="NrdI"/>
    <property type="match status" value="1"/>
</dbReference>
<dbReference type="InterPro" id="IPR029039">
    <property type="entry name" value="Flavoprotein-like_sf"/>
</dbReference>
<dbReference type="InterPro" id="IPR020852">
    <property type="entry name" value="RNR_Ib_NrdI_bac"/>
</dbReference>
<dbReference type="InterPro" id="IPR004465">
    <property type="entry name" value="RNR_NrdI"/>
</dbReference>
<dbReference type="NCBIfam" id="TIGR00333">
    <property type="entry name" value="nrdI"/>
    <property type="match status" value="1"/>
</dbReference>
<dbReference type="PANTHER" id="PTHR37297">
    <property type="entry name" value="PROTEIN NRDI"/>
    <property type="match status" value="1"/>
</dbReference>
<dbReference type="PANTHER" id="PTHR37297:SF1">
    <property type="entry name" value="PROTEIN NRDI"/>
    <property type="match status" value="1"/>
</dbReference>
<dbReference type="Pfam" id="PF07972">
    <property type="entry name" value="Flavodoxin_NdrI"/>
    <property type="match status" value="1"/>
</dbReference>
<dbReference type="PIRSF" id="PIRSF005087">
    <property type="entry name" value="NrdI"/>
    <property type="match status" value="1"/>
</dbReference>
<dbReference type="SUPFAM" id="SSF52218">
    <property type="entry name" value="Flavoproteins"/>
    <property type="match status" value="1"/>
</dbReference>
<name>NRDI_ECOUT</name>
<proteinExistence type="inferred from homology"/>
<comment type="function">
    <text evidence="1">Probably involved in ribonucleotide reductase function.</text>
</comment>
<comment type="similarity">
    <text evidence="1">Belongs to the NrdI family.</text>
</comment>
<feature type="chain" id="PRO_1000016501" description="Protein NrdI">
    <location>
        <begin position="1"/>
        <end position="136"/>
    </location>
</feature>